<feature type="chain" id="PRO_0000435435" description="General transcription and DNA repair factor IIH subunit TFB2">
    <location>
        <begin position="1"/>
        <end position="452"/>
    </location>
</feature>
<feature type="sequence conflict" description="In Ref. 4; BAD43671." evidence="3" ref="4">
    <original>D</original>
    <variation>G</variation>
    <location>
        <position position="348"/>
    </location>
</feature>
<sequence length="452" mass="52070">MPQVKIIAKNFMDMVASLPAIKLDKLYNNVFICEAILRSLPPLAKKYVLQMLYIDVPVPATMMEEWVLADGTSKHRVAIDRLIQLRIFSEISDRKRGTSYSLNPTFQNNLQKHIISGGVLPREPMNSDNAIKLPSLQELETYALKQWECFLLQLINSGQGEKLTGISSSMMKIFQRGLLSQRDKDGPRLTESGFQFLLMDTNAQLWYIIREYILNAEERDVDPADLISFLLELSFHVTGQAYNLNTLTEVQNNTLKDLADLGLVKLQQGRKDSWFIPTKLATNLSVSLADSSARKEGFVVMETNFRMYAYSTSKLQCEILRLFARIEYQLPNLIACAITKESLYNAFDNGITSDQIITFLQQNSHPRCADRVPSIPENVTDQIRLWETDLQRIEMTQAHFYDEFPSKDVFEAACDFAREWRGLLWEDSKRMRLVVKSEVHNQMREFLHTQSR</sequence>
<reference key="1">
    <citation type="journal article" date="1998" name="Nature">
        <title>Analysis of 1.9 Mb of contiguous sequence from chromosome 4 of Arabidopsis thaliana.</title>
        <authorList>
            <person name="Bevan M."/>
            <person name="Bancroft I."/>
            <person name="Bent E."/>
            <person name="Love K."/>
            <person name="Goodman H.M."/>
            <person name="Dean C."/>
            <person name="Bergkamp R."/>
            <person name="Dirkse W."/>
            <person name="van Staveren M."/>
            <person name="Stiekema W."/>
            <person name="Drost L."/>
            <person name="Ridley P."/>
            <person name="Hudson S.-A."/>
            <person name="Patel K."/>
            <person name="Murphy G."/>
            <person name="Piffanelli P."/>
            <person name="Wedler H."/>
            <person name="Wedler E."/>
            <person name="Wambutt R."/>
            <person name="Weitzenegger T."/>
            <person name="Pohl T."/>
            <person name="Terryn N."/>
            <person name="Gielen J."/>
            <person name="Villarroel R."/>
            <person name="De Clercq R."/>
            <person name="van Montagu M."/>
            <person name="Lecharny A."/>
            <person name="Aubourg S."/>
            <person name="Gy I."/>
            <person name="Kreis M."/>
            <person name="Lao N."/>
            <person name="Kavanagh T."/>
            <person name="Hempel S."/>
            <person name="Kotter P."/>
            <person name="Entian K.-D."/>
            <person name="Rieger M."/>
            <person name="Schaefer M."/>
            <person name="Funk B."/>
            <person name="Mueller-Auer S."/>
            <person name="Silvey M."/>
            <person name="James R."/>
            <person name="Monfort A."/>
            <person name="Pons A."/>
            <person name="Puigdomenech P."/>
            <person name="Douka A."/>
            <person name="Voukelatou E."/>
            <person name="Milioni D."/>
            <person name="Hatzopoulos P."/>
            <person name="Piravandi E."/>
            <person name="Obermaier B."/>
            <person name="Hilbert H."/>
            <person name="Duesterhoeft A."/>
            <person name="Moores T."/>
            <person name="Jones J.D.G."/>
            <person name="Eneva T."/>
            <person name="Palme K."/>
            <person name="Benes V."/>
            <person name="Rechmann S."/>
            <person name="Ansorge W."/>
            <person name="Cooke R."/>
            <person name="Berger C."/>
            <person name="Delseny M."/>
            <person name="Voet M."/>
            <person name="Volckaert G."/>
            <person name="Mewes H.-W."/>
            <person name="Klosterman S."/>
            <person name="Schueller C."/>
            <person name="Chalwatzis N."/>
        </authorList>
    </citation>
    <scope>NUCLEOTIDE SEQUENCE [LARGE SCALE GENOMIC DNA]</scope>
    <source>
        <strain>cv. Columbia</strain>
    </source>
</reference>
<reference key="2">
    <citation type="journal article" date="1999" name="Nature">
        <title>Sequence and analysis of chromosome 4 of the plant Arabidopsis thaliana.</title>
        <authorList>
            <person name="Mayer K.F.X."/>
            <person name="Schueller C."/>
            <person name="Wambutt R."/>
            <person name="Murphy G."/>
            <person name="Volckaert G."/>
            <person name="Pohl T."/>
            <person name="Duesterhoeft A."/>
            <person name="Stiekema W."/>
            <person name="Entian K.-D."/>
            <person name="Terryn N."/>
            <person name="Harris B."/>
            <person name="Ansorge W."/>
            <person name="Brandt P."/>
            <person name="Grivell L.A."/>
            <person name="Rieger M."/>
            <person name="Weichselgartner M."/>
            <person name="de Simone V."/>
            <person name="Obermaier B."/>
            <person name="Mache R."/>
            <person name="Mueller M."/>
            <person name="Kreis M."/>
            <person name="Delseny M."/>
            <person name="Puigdomenech P."/>
            <person name="Watson M."/>
            <person name="Schmidtheini T."/>
            <person name="Reichert B."/>
            <person name="Portetelle D."/>
            <person name="Perez-Alonso M."/>
            <person name="Boutry M."/>
            <person name="Bancroft I."/>
            <person name="Vos P."/>
            <person name="Hoheisel J."/>
            <person name="Zimmermann W."/>
            <person name="Wedler H."/>
            <person name="Ridley P."/>
            <person name="Langham S.-A."/>
            <person name="McCullagh B."/>
            <person name="Bilham L."/>
            <person name="Robben J."/>
            <person name="van der Schueren J."/>
            <person name="Grymonprez B."/>
            <person name="Chuang Y.-J."/>
            <person name="Vandenbussche F."/>
            <person name="Braeken M."/>
            <person name="Weltjens I."/>
            <person name="Voet M."/>
            <person name="Bastiaens I."/>
            <person name="Aert R."/>
            <person name="Defoor E."/>
            <person name="Weitzenegger T."/>
            <person name="Bothe G."/>
            <person name="Ramsperger U."/>
            <person name="Hilbert H."/>
            <person name="Braun M."/>
            <person name="Holzer E."/>
            <person name="Brandt A."/>
            <person name="Peters S."/>
            <person name="van Staveren M."/>
            <person name="Dirkse W."/>
            <person name="Mooijman P."/>
            <person name="Klein Lankhorst R."/>
            <person name="Rose M."/>
            <person name="Hauf J."/>
            <person name="Koetter P."/>
            <person name="Berneiser S."/>
            <person name="Hempel S."/>
            <person name="Feldpausch M."/>
            <person name="Lamberth S."/>
            <person name="Van den Daele H."/>
            <person name="De Keyser A."/>
            <person name="Buysshaert C."/>
            <person name="Gielen J."/>
            <person name="Villarroel R."/>
            <person name="De Clercq R."/>
            <person name="van Montagu M."/>
            <person name="Rogers J."/>
            <person name="Cronin A."/>
            <person name="Quail M.A."/>
            <person name="Bray-Allen S."/>
            <person name="Clark L."/>
            <person name="Doggett J."/>
            <person name="Hall S."/>
            <person name="Kay M."/>
            <person name="Lennard N."/>
            <person name="McLay K."/>
            <person name="Mayes R."/>
            <person name="Pettett A."/>
            <person name="Rajandream M.A."/>
            <person name="Lyne M."/>
            <person name="Benes V."/>
            <person name="Rechmann S."/>
            <person name="Borkova D."/>
            <person name="Bloecker H."/>
            <person name="Scharfe M."/>
            <person name="Grimm M."/>
            <person name="Loehnert T.-H."/>
            <person name="Dose S."/>
            <person name="de Haan M."/>
            <person name="Maarse A.C."/>
            <person name="Schaefer M."/>
            <person name="Mueller-Auer S."/>
            <person name="Gabel C."/>
            <person name="Fuchs M."/>
            <person name="Fartmann B."/>
            <person name="Granderath K."/>
            <person name="Dauner D."/>
            <person name="Herzl A."/>
            <person name="Neumann S."/>
            <person name="Argiriou A."/>
            <person name="Vitale D."/>
            <person name="Liguori R."/>
            <person name="Piravandi E."/>
            <person name="Massenet O."/>
            <person name="Quigley F."/>
            <person name="Clabauld G."/>
            <person name="Muendlein A."/>
            <person name="Felber R."/>
            <person name="Schnabl S."/>
            <person name="Hiller R."/>
            <person name="Schmidt W."/>
            <person name="Lecharny A."/>
            <person name="Aubourg S."/>
            <person name="Chefdor F."/>
            <person name="Cooke R."/>
            <person name="Berger C."/>
            <person name="Monfort A."/>
            <person name="Casacuberta E."/>
            <person name="Gibbons T."/>
            <person name="Weber N."/>
            <person name="Vandenbol M."/>
            <person name="Bargues M."/>
            <person name="Terol J."/>
            <person name="Torres A."/>
            <person name="Perez-Perez A."/>
            <person name="Purnelle B."/>
            <person name="Bent E."/>
            <person name="Johnson S."/>
            <person name="Tacon D."/>
            <person name="Jesse T."/>
            <person name="Heijnen L."/>
            <person name="Schwarz S."/>
            <person name="Scholler P."/>
            <person name="Heber S."/>
            <person name="Francs P."/>
            <person name="Bielke C."/>
            <person name="Frishman D."/>
            <person name="Haase D."/>
            <person name="Lemcke K."/>
            <person name="Mewes H.-W."/>
            <person name="Stocker S."/>
            <person name="Zaccaria P."/>
            <person name="Bevan M."/>
            <person name="Wilson R.K."/>
            <person name="de la Bastide M."/>
            <person name="Habermann K."/>
            <person name="Parnell L."/>
            <person name="Dedhia N."/>
            <person name="Gnoj L."/>
            <person name="Schutz K."/>
            <person name="Huang E."/>
            <person name="Spiegel L."/>
            <person name="Sekhon M."/>
            <person name="Murray J."/>
            <person name="Sheet P."/>
            <person name="Cordes M."/>
            <person name="Abu-Threideh J."/>
            <person name="Stoneking T."/>
            <person name="Kalicki J."/>
            <person name="Graves T."/>
            <person name="Harmon G."/>
            <person name="Edwards J."/>
            <person name="Latreille P."/>
            <person name="Courtney L."/>
            <person name="Cloud J."/>
            <person name="Abbott A."/>
            <person name="Scott K."/>
            <person name="Johnson D."/>
            <person name="Minx P."/>
            <person name="Bentley D."/>
            <person name="Fulton B."/>
            <person name="Miller N."/>
            <person name="Greco T."/>
            <person name="Kemp K."/>
            <person name="Kramer J."/>
            <person name="Fulton L."/>
            <person name="Mardis E."/>
            <person name="Dante M."/>
            <person name="Pepin K."/>
            <person name="Hillier L.W."/>
            <person name="Nelson J."/>
            <person name="Spieth J."/>
            <person name="Ryan E."/>
            <person name="Andrews S."/>
            <person name="Geisel C."/>
            <person name="Layman D."/>
            <person name="Du H."/>
            <person name="Ali J."/>
            <person name="Berghoff A."/>
            <person name="Jones K."/>
            <person name="Drone K."/>
            <person name="Cotton M."/>
            <person name="Joshu C."/>
            <person name="Antonoiu B."/>
            <person name="Zidanic M."/>
            <person name="Strong C."/>
            <person name="Sun H."/>
            <person name="Lamar B."/>
            <person name="Yordan C."/>
            <person name="Ma P."/>
            <person name="Zhong J."/>
            <person name="Preston R."/>
            <person name="Vil D."/>
            <person name="Shekher M."/>
            <person name="Matero A."/>
            <person name="Shah R."/>
            <person name="Swaby I.K."/>
            <person name="O'Shaughnessy A."/>
            <person name="Rodriguez M."/>
            <person name="Hoffman J."/>
            <person name="Till S."/>
            <person name="Granat S."/>
            <person name="Shohdy N."/>
            <person name="Hasegawa A."/>
            <person name="Hameed A."/>
            <person name="Lodhi M."/>
            <person name="Johnson A."/>
            <person name="Chen E."/>
            <person name="Marra M.A."/>
            <person name="Martienssen R."/>
            <person name="McCombie W.R."/>
        </authorList>
    </citation>
    <scope>NUCLEOTIDE SEQUENCE [LARGE SCALE GENOMIC DNA]</scope>
    <source>
        <strain>cv. Columbia</strain>
    </source>
</reference>
<reference key="3">
    <citation type="journal article" date="2017" name="Plant J.">
        <title>Araport11: a complete reannotation of the Arabidopsis thaliana reference genome.</title>
        <authorList>
            <person name="Cheng C.Y."/>
            <person name="Krishnakumar V."/>
            <person name="Chan A.P."/>
            <person name="Thibaud-Nissen F."/>
            <person name="Schobel S."/>
            <person name="Town C.D."/>
        </authorList>
    </citation>
    <scope>GENOME REANNOTATION</scope>
    <source>
        <strain>cv. Columbia</strain>
    </source>
</reference>
<reference key="4">
    <citation type="submission" date="2004-09" db="EMBL/GenBank/DDBJ databases">
        <title>Large-scale analysis of RIKEN Arabidopsis full-length (RAFL) cDNAs.</title>
        <authorList>
            <person name="Totoki Y."/>
            <person name="Seki M."/>
            <person name="Ishida J."/>
            <person name="Nakajima M."/>
            <person name="Enju A."/>
            <person name="Kamiya A."/>
            <person name="Narusaka M."/>
            <person name="Shin-i T."/>
            <person name="Nakagawa M."/>
            <person name="Sakamoto N."/>
            <person name="Oishi K."/>
            <person name="Kohara Y."/>
            <person name="Kobayashi M."/>
            <person name="Toyoda A."/>
            <person name="Sakaki Y."/>
            <person name="Sakurai T."/>
            <person name="Iida K."/>
            <person name="Akiyama K."/>
            <person name="Satou M."/>
            <person name="Toyoda T."/>
            <person name="Konagaya A."/>
            <person name="Carninci P."/>
            <person name="Kawai J."/>
            <person name="Hayashizaki Y."/>
            <person name="Shinozaki K."/>
        </authorList>
    </citation>
    <scope>NUCLEOTIDE SEQUENCE [LARGE SCALE MRNA]</scope>
    <source>
        <strain>cv. Columbia</strain>
    </source>
</reference>
<reference key="5">
    <citation type="submission" date="2006-10" db="EMBL/GenBank/DDBJ databases">
        <title>Arabidopsis ORF Clone.</title>
        <authorList>
            <person name="Bautista V.R."/>
            <person name="Kim C.J."/>
            <person name="Chen H."/>
            <person name="Quinitio C."/>
            <person name="Ecker J.R."/>
        </authorList>
    </citation>
    <scope>NUCLEOTIDE SEQUENCE [LARGE SCALE MRNA]</scope>
    <source>
        <strain>cv. Columbia</strain>
    </source>
</reference>
<reference key="6">
    <citation type="journal article" date="2005" name="Environ. Mol. Mutagen.">
        <title>Components of nucleotide excision repair and DNA damage tolerance in Arabidopsis thaliana.</title>
        <authorList>
            <person name="Kunz B.A."/>
            <person name="Anderson H.J."/>
            <person name="Osmond M.J."/>
            <person name="Vonarx E.J."/>
        </authorList>
    </citation>
    <scope>COMPONENT OF TFIIH CORE COMPLEX</scope>
    <scope>NOMENCLATURE</scope>
</reference>
<keyword id="KW-0025">Alternative splicing</keyword>
<keyword id="KW-0227">DNA damage</keyword>
<keyword id="KW-0234">DNA repair</keyword>
<keyword id="KW-0539">Nucleus</keyword>
<keyword id="KW-1185">Reference proteome</keyword>
<keyword id="KW-0804">Transcription</keyword>
<keyword id="KW-0805">Transcription regulation</keyword>
<proteinExistence type="evidence at transcript level"/>
<evidence type="ECO:0000250" key="1">
    <source>
        <dbReference type="UniProtKB" id="Q92759"/>
    </source>
</evidence>
<evidence type="ECO:0000303" key="2">
    <source>
    </source>
</evidence>
<evidence type="ECO:0000305" key="3"/>
<evidence type="ECO:0000305" key="4">
    <source>
    </source>
</evidence>
<evidence type="ECO:0000312" key="5">
    <source>
        <dbReference type="Araport" id="AT4G17020"/>
    </source>
</evidence>
<evidence type="ECO:0000312" key="6">
    <source>
        <dbReference type="EMBL" id="BAD43531.1"/>
    </source>
</evidence>
<evidence type="ECO:0000312" key="7">
    <source>
        <dbReference type="EMBL" id="CAB10482.1"/>
    </source>
</evidence>
<gene>
    <name evidence="3" type="primary">TFB2</name>
    <name evidence="3" type="synonym">GTF2H4</name>
    <name evidence="5" type="ordered locus">At4g17020</name>
    <name evidence="7" type="ORF">dl4540c</name>
</gene>
<organism evidence="6">
    <name type="scientific">Arabidopsis thaliana</name>
    <name type="common">Mouse-ear cress</name>
    <dbReference type="NCBI Taxonomy" id="3702"/>
    <lineage>
        <taxon>Eukaryota</taxon>
        <taxon>Viridiplantae</taxon>
        <taxon>Streptophyta</taxon>
        <taxon>Embryophyta</taxon>
        <taxon>Tracheophyta</taxon>
        <taxon>Spermatophyta</taxon>
        <taxon>Magnoliopsida</taxon>
        <taxon>eudicotyledons</taxon>
        <taxon>Gunneridae</taxon>
        <taxon>Pentapetalae</taxon>
        <taxon>rosids</taxon>
        <taxon>malvids</taxon>
        <taxon>Brassicales</taxon>
        <taxon>Brassicaceae</taxon>
        <taxon>Camelineae</taxon>
        <taxon>Arabidopsis</taxon>
    </lineage>
</organism>
<name>TFB2_ARATH</name>
<protein>
    <recommendedName>
        <fullName evidence="3">General transcription and DNA repair factor IIH subunit TFB2</fullName>
        <shortName evidence="2">AtTFB2</shortName>
        <shortName evidence="3">TFIIH subunit TFB2</shortName>
    </recommendedName>
    <alternativeName>
        <fullName evidence="3">RNA polymerase II transcription factor B subunit 2</fullName>
    </alternativeName>
</protein>
<accession>Q680U9</accession>
<accession>O23546</accession>
<accession>Q680F9</accession>
<comment type="function">
    <text evidence="1">Component of the general transcription and DNA repair factor IIH (TFIIH) core complex, which is involved in general and transcription-coupled nucleotide excision repair (NER) of damaged DNA and, when complexed to CAK, in RNA transcription by RNA polymerase II. In NER, TFIIH acts by opening DNA around the lesion to allow the excision of the damaged oligonucleotide and its replacement by a new DNA fragment. In transcription, TFIIH has an essential role in transcription initiation. When the pre-initiation complex (PIC) has been established, TFIIH is required for promoter opening and promoter escape. Phosphorylation of the C-terminal tail (CTD) of the largest subunit of RNA polymerase II by the kinase module CAK controls the initiation of transcription.</text>
</comment>
<comment type="subunit">
    <text evidence="1 4">Component of the 7-subunit TFIIH core complex composed of XPB, XPD, TFB1/GTF2H1, GTF2H2/P44, TFB4/GTF2H3, TFB2/GTF2H4 and TFB5/GTF2H5, which is active in NER. The core complex associates with the 3-subunit CDK-activating kinase (CAK) module composed of CYCH1/cyclin H1, CDKD and MAT1/At4g30820 to form the 10-subunit holoenzyme (holo-TFIIH) active in transcription.</text>
</comment>
<comment type="subcellular location">
    <subcellularLocation>
        <location evidence="3">Nucleus</location>
    </subcellularLocation>
</comment>
<comment type="alternative products">
    <event type="alternative splicing"/>
    <isoform>
        <id>Q680U9-1</id>
        <name>1</name>
        <sequence type="displayed"/>
    </isoform>
    <text evidence="3">A number of isoforms are produced. According to EST sequences.</text>
</comment>
<comment type="similarity">
    <text evidence="3">Belongs to the TFB2 family.</text>
</comment>
<comment type="sequence caution" evidence="3">
    <conflict type="erroneous gene model prediction">
        <sequence resource="EMBL-CDS" id="CAB10482"/>
    </conflict>
</comment>
<comment type="sequence caution" evidence="3">
    <conflict type="erroneous gene model prediction">
        <sequence resource="EMBL-CDS" id="CAB80973"/>
    </conflict>
</comment>
<dbReference type="EMBL" id="Z97342">
    <property type="protein sequence ID" value="CAB10482.1"/>
    <property type="status" value="ALT_SEQ"/>
    <property type="molecule type" value="Genomic_DNA"/>
</dbReference>
<dbReference type="EMBL" id="AL161545">
    <property type="protein sequence ID" value="CAB80973.1"/>
    <property type="status" value="ALT_SEQ"/>
    <property type="molecule type" value="Genomic_DNA"/>
</dbReference>
<dbReference type="EMBL" id="CP002687">
    <property type="protein sequence ID" value="AEE83839.1"/>
    <property type="molecule type" value="Genomic_DNA"/>
</dbReference>
<dbReference type="EMBL" id="AK175768">
    <property type="protein sequence ID" value="BAD43531.1"/>
    <property type="molecule type" value="mRNA"/>
</dbReference>
<dbReference type="EMBL" id="AK175908">
    <property type="protein sequence ID" value="BAD43671.1"/>
    <property type="molecule type" value="mRNA"/>
</dbReference>
<dbReference type="EMBL" id="BT029179">
    <property type="protein sequence ID" value="ABJ17114.1"/>
    <property type="molecule type" value="mRNA"/>
</dbReference>
<dbReference type="PIR" id="E71438">
    <property type="entry name" value="E71438"/>
</dbReference>
<dbReference type="RefSeq" id="NP_193435.2">
    <molecule id="Q680U9-1"/>
    <property type="nucleotide sequence ID" value="NM_117806.4"/>
</dbReference>
<dbReference type="SMR" id="Q680U9"/>
<dbReference type="FunCoup" id="Q680U9">
    <property type="interactions" value="2831"/>
</dbReference>
<dbReference type="IntAct" id="Q680U9">
    <property type="interactions" value="3"/>
</dbReference>
<dbReference type="STRING" id="3702.Q680U9"/>
<dbReference type="PaxDb" id="3702-AT4G17020.3"/>
<dbReference type="EnsemblPlants" id="AT4G17020.1">
    <molecule id="Q680U9-1"/>
    <property type="protein sequence ID" value="AT4G17020.1"/>
    <property type="gene ID" value="AT4G17020"/>
</dbReference>
<dbReference type="GeneID" id="827410"/>
<dbReference type="Gramene" id="AT4G17020.1">
    <molecule id="Q680U9-1"/>
    <property type="protein sequence ID" value="AT4G17020.1"/>
    <property type="gene ID" value="AT4G17020"/>
</dbReference>
<dbReference type="KEGG" id="ath:AT4G17020"/>
<dbReference type="Araport" id="AT4G17020"/>
<dbReference type="TAIR" id="AT4G17020"/>
<dbReference type="eggNOG" id="KOG3471">
    <property type="taxonomic scope" value="Eukaryota"/>
</dbReference>
<dbReference type="HOGENOM" id="CLU_027280_4_0_1"/>
<dbReference type="InParanoid" id="Q680U9"/>
<dbReference type="OMA" id="KGFIIIE"/>
<dbReference type="PhylomeDB" id="Q680U9"/>
<dbReference type="PRO" id="PR:Q680U9"/>
<dbReference type="Proteomes" id="UP000006548">
    <property type="component" value="Chromosome 4"/>
</dbReference>
<dbReference type="ExpressionAtlas" id="Q680U9">
    <property type="expression patterns" value="baseline and differential"/>
</dbReference>
<dbReference type="GO" id="GO:0000439">
    <property type="term" value="C:transcription factor TFIIH core complex"/>
    <property type="evidence" value="ECO:0007669"/>
    <property type="project" value="InterPro"/>
</dbReference>
<dbReference type="GO" id="GO:0001671">
    <property type="term" value="F:ATPase activator activity"/>
    <property type="evidence" value="ECO:0007669"/>
    <property type="project" value="InterPro"/>
</dbReference>
<dbReference type="GO" id="GO:0006289">
    <property type="term" value="P:nucleotide-excision repair"/>
    <property type="evidence" value="ECO:0007669"/>
    <property type="project" value="InterPro"/>
</dbReference>
<dbReference type="Gene3D" id="3.30.70.2610">
    <property type="match status" value="1"/>
</dbReference>
<dbReference type="InterPro" id="IPR040662">
    <property type="entry name" value="Tfb2_C"/>
</dbReference>
<dbReference type="InterPro" id="IPR004598">
    <property type="entry name" value="TFIIH_p52/Tfb2"/>
</dbReference>
<dbReference type="NCBIfam" id="TIGR00625">
    <property type="entry name" value="tfb2"/>
    <property type="match status" value="1"/>
</dbReference>
<dbReference type="PANTHER" id="PTHR13152:SF0">
    <property type="entry name" value="GENERAL TRANSCRIPTION FACTOR IIH SUBUNIT 4"/>
    <property type="match status" value="1"/>
</dbReference>
<dbReference type="PANTHER" id="PTHR13152">
    <property type="entry name" value="TFIIH, POLYPEPTIDE 4"/>
    <property type="match status" value="1"/>
</dbReference>
<dbReference type="Pfam" id="PF03849">
    <property type="entry name" value="Tfb2"/>
    <property type="match status" value="1"/>
</dbReference>
<dbReference type="Pfam" id="PF18307">
    <property type="entry name" value="Tfb2_C"/>
    <property type="match status" value="1"/>
</dbReference>